<evidence type="ECO:0000255" key="1">
    <source>
        <dbReference type="HAMAP-Rule" id="MF_01152"/>
    </source>
</evidence>
<keyword id="KW-0143">Chaperone</keyword>
<keyword id="KW-0963">Cytoplasm</keyword>
<keyword id="KW-0235">DNA replication</keyword>
<keyword id="KW-0479">Metal-binding</keyword>
<keyword id="KW-0677">Repeat</keyword>
<keyword id="KW-0346">Stress response</keyword>
<keyword id="KW-0862">Zinc</keyword>
<keyword id="KW-0863">Zinc-finger</keyword>
<protein>
    <recommendedName>
        <fullName evidence="1">Chaperone protein DnaJ</fullName>
    </recommendedName>
</protein>
<reference key="1">
    <citation type="journal article" date="2005" name="J. Bacteriol.">
        <title>Genomic sequence of an otitis media isolate of nontypeable Haemophilus influenzae: comparative study with H. influenzae serotype d, strain KW20.</title>
        <authorList>
            <person name="Harrison A."/>
            <person name="Dyer D.W."/>
            <person name="Gillaspy A."/>
            <person name="Ray W.C."/>
            <person name="Mungur R."/>
            <person name="Carson M.B."/>
            <person name="Zhong H."/>
            <person name="Gipson J."/>
            <person name="Gipson M."/>
            <person name="Johnson L.S."/>
            <person name="Lewis L."/>
            <person name="Bakaletz L.O."/>
            <person name="Munson R.S. Jr."/>
        </authorList>
    </citation>
    <scope>NUCLEOTIDE SEQUENCE [LARGE SCALE GENOMIC DNA]</scope>
    <source>
        <strain>86-028NP</strain>
    </source>
</reference>
<gene>
    <name evidence="1" type="primary">dnaJ</name>
    <name type="ordered locus">NTHI1928</name>
</gene>
<accession>Q4QJW5</accession>
<dbReference type="EMBL" id="CP000057">
    <property type="protein sequence ID" value="AAX88682.1"/>
    <property type="molecule type" value="Genomic_DNA"/>
</dbReference>
<dbReference type="RefSeq" id="WP_011272710.1">
    <property type="nucleotide sequence ID" value="NC_007146.2"/>
</dbReference>
<dbReference type="SMR" id="Q4QJW5"/>
<dbReference type="KEGG" id="hit:NTHI1928"/>
<dbReference type="HOGENOM" id="CLU_017633_0_7_6"/>
<dbReference type="Proteomes" id="UP000002525">
    <property type="component" value="Chromosome"/>
</dbReference>
<dbReference type="GO" id="GO:0005737">
    <property type="term" value="C:cytoplasm"/>
    <property type="evidence" value="ECO:0007669"/>
    <property type="project" value="UniProtKB-SubCell"/>
</dbReference>
<dbReference type="GO" id="GO:0005524">
    <property type="term" value="F:ATP binding"/>
    <property type="evidence" value="ECO:0007669"/>
    <property type="project" value="InterPro"/>
</dbReference>
<dbReference type="GO" id="GO:0031072">
    <property type="term" value="F:heat shock protein binding"/>
    <property type="evidence" value="ECO:0007669"/>
    <property type="project" value="InterPro"/>
</dbReference>
<dbReference type="GO" id="GO:0051082">
    <property type="term" value="F:unfolded protein binding"/>
    <property type="evidence" value="ECO:0007669"/>
    <property type="project" value="UniProtKB-UniRule"/>
</dbReference>
<dbReference type="GO" id="GO:0008270">
    <property type="term" value="F:zinc ion binding"/>
    <property type="evidence" value="ECO:0007669"/>
    <property type="project" value="UniProtKB-UniRule"/>
</dbReference>
<dbReference type="GO" id="GO:0051085">
    <property type="term" value="P:chaperone cofactor-dependent protein refolding"/>
    <property type="evidence" value="ECO:0007669"/>
    <property type="project" value="TreeGrafter"/>
</dbReference>
<dbReference type="GO" id="GO:0006260">
    <property type="term" value="P:DNA replication"/>
    <property type="evidence" value="ECO:0007669"/>
    <property type="project" value="UniProtKB-KW"/>
</dbReference>
<dbReference type="GO" id="GO:0042026">
    <property type="term" value="P:protein refolding"/>
    <property type="evidence" value="ECO:0007669"/>
    <property type="project" value="TreeGrafter"/>
</dbReference>
<dbReference type="GO" id="GO:0009408">
    <property type="term" value="P:response to heat"/>
    <property type="evidence" value="ECO:0007669"/>
    <property type="project" value="InterPro"/>
</dbReference>
<dbReference type="CDD" id="cd06257">
    <property type="entry name" value="DnaJ"/>
    <property type="match status" value="1"/>
</dbReference>
<dbReference type="CDD" id="cd10747">
    <property type="entry name" value="DnaJ_C"/>
    <property type="match status" value="1"/>
</dbReference>
<dbReference type="CDD" id="cd10719">
    <property type="entry name" value="DnaJ_zf"/>
    <property type="match status" value="1"/>
</dbReference>
<dbReference type="FunFam" id="1.10.287.110:FF:000034">
    <property type="entry name" value="Chaperone protein DnaJ"/>
    <property type="match status" value="1"/>
</dbReference>
<dbReference type="FunFam" id="2.10.230.10:FF:000002">
    <property type="entry name" value="Molecular chaperone DnaJ"/>
    <property type="match status" value="1"/>
</dbReference>
<dbReference type="FunFam" id="2.60.260.20:FF:000004">
    <property type="entry name" value="Molecular chaperone DnaJ"/>
    <property type="match status" value="1"/>
</dbReference>
<dbReference type="Gene3D" id="1.10.287.110">
    <property type="entry name" value="DnaJ domain"/>
    <property type="match status" value="1"/>
</dbReference>
<dbReference type="Gene3D" id="2.10.230.10">
    <property type="entry name" value="Heat shock protein DnaJ, cysteine-rich domain"/>
    <property type="match status" value="1"/>
</dbReference>
<dbReference type="Gene3D" id="2.60.260.20">
    <property type="entry name" value="Urease metallochaperone UreE, N-terminal domain"/>
    <property type="match status" value="2"/>
</dbReference>
<dbReference type="HAMAP" id="MF_01152">
    <property type="entry name" value="DnaJ"/>
    <property type="match status" value="1"/>
</dbReference>
<dbReference type="InterPro" id="IPR012724">
    <property type="entry name" value="DnaJ"/>
</dbReference>
<dbReference type="InterPro" id="IPR002939">
    <property type="entry name" value="DnaJ_C"/>
</dbReference>
<dbReference type="InterPro" id="IPR001623">
    <property type="entry name" value="DnaJ_domain"/>
</dbReference>
<dbReference type="InterPro" id="IPR018253">
    <property type="entry name" value="DnaJ_domain_CS"/>
</dbReference>
<dbReference type="InterPro" id="IPR008971">
    <property type="entry name" value="HSP40/DnaJ_pept-bd"/>
</dbReference>
<dbReference type="InterPro" id="IPR001305">
    <property type="entry name" value="HSP_DnaJ_Cys-rich_dom"/>
</dbReference>
<dbReference type="InterPro" id="IPR036410">
    <property type="entry name" value="HSP_DnaJ_Cys-rich_dom_sf"/>
</dbReference>
<dbReference type="InterPro" id="IPR036869">
    <property type="entry name" value="J_dom_sf"/>
</dbReference>
<dbReference type="NCBIfam" id="TIGR02349">
    <property type="entry name" value="DnaJ_bact"/>
    <property type="match status" value="1"/>
</dbReference>
<dbReference type="NCBIfam" id="NF008035">
    <property type="entry name" value="PRK10767.1"/>
    <property type="match status" value="1"/>
</dbReference>
<dbReference type="PANTHER" id="PTHR43096:SF48">
    <property type="entry name" value="CHAPERONE PROTEIN DNAJ"/>
    <property type="match status" value="1"/>
</dbReference>
<dbReference type="PANTHER" id="PTHR43096">
    <property type="entry name" value="DNAJ HOMOLOG 1, MITOCHONDRIAL-RELATED"/>
    <property type="match status" value="1"/>
</dbReference>
<dbReference type="Pfam" id="PF00226">
    <property type="entry name" value="DnaJ"/>
    <property type="match status" value="1"/>
</dbReference>
<dbReference type="Pfam" id="PF01556">
    <property type="entry name" value="DnaJ_C"/>
    <property type="match status" value="1"/>
</dbReference>
<dbReference type="Pfam" id="PF00684">
    <property type="entry name" value="DnaJ_CXXCXGXG"/>
    <property type="match status" value="1"/>
</dbReference>
<dbReference type="PRINTS" id="PR00625">
    <property type="entry name" value="JDOMAIN"/>
</dbReference>
<dbReference type="SMART" id="SM00271">
    <property type="entry name" value="DnaJ"/>
    <property type="match status" value="1"/>
</dbReference>
<dbReference type="SUPFAM" id="SSF46565">
    <property type="entry name" value="Chaperone J-domain"/>
    <property type="match status" value="1"/>
</dbReference>
<dbReference type="SUPFAM" id="SSF57938">
    <property type="entry name" value="DnaJ/Hsp40 cysteine-rich domain"/>
    <property type="match status" value="1"/>
</dbReference>
<dbReference type="SUPFAM" id="SSF49493">
    <property type="entry name" value="HSP40/DnaJ peptide-binding domain"/>
    <property type="match status" value="2"/>
</dbReference>
<dbReference type="PROSITE" id="PS00636">
    <property type="entry name" value="DNAJ_1"/>
    <property type="match status" value="1"/>
</dbReference>
<dbReference type="PROSITE" id="PS50076">
    <property type="entry name" value="DNAJ_2"/>
    <property type="match status" value="1"/>
</dbReference>
<dbReference type="PROSITE" id="PS51188">
    <property type="entry name" value="ZF_CR"/>
    <property type="match status" value="1"/>
</dbReference>
<sequence length="381" mass="41154">MAKKDYYEVLGLQKGASEDDIKRAYKRLASKHHPDKNQGSKEAEEKFKEINEAYEVLGDDQKRAAYDQYGHAAFEQGGGTGGFGGGFGGADFGDMFGDIFGDIFGGGRGRQRVVRGEDLRYDLEISLEEAVKGTTKDIQINTLAHCDSCGGSGAEKGSKVETCPHCHGSGRIRRQQGFFVSESICPTCHGSGKKIEKPCRSCHGEGRVHKKENLSVKIPAGVDTGNQLRLAGKGAAGENGAPAGDLYVVIHVREHNIFERDGSNLYCEVPISFATAALGGEIEVPTLDGRVKLKIPAETQTGKLFRMRGKGVASTRSGYAGDLICRIVVETPVNLTSEQKELLHKLEESLQGKDLSKHAPKSSGFLDGVKKFFDNLGKSDK</sequence>
<feature type="chain" id="PRO_1000085201" description="Chaperone protein DnaJ">
    <location>
        <begin position="1"/>
        <end position="381"/>
    </location>
</feature>
<feature type="domain" description="J" evidence="1">
    <location>
        <begin position="5"/>
        <end position="70"/>
    </location>
</feature>
<feature type="repeat" description="CXXCXGXG motif">
    <location>
        <begin position="146"/>
        <end position="153"/>
    </location>
</feature>
<feature type="repeat" description="CXXCXGXG motif">
    <location>
        <begin position="163"/>
        <end position="170"/>
    </location>
</feature>
<feature type="repeat" description="CXXCXGXG motif">
    <location>
        <begin position="185"/>
        <end position="192"/>
    </location>
</feature>
<feature type="repeat" description="CXXCXGXG motif">
    <location>
        <begin position="199"/>
        <end position="206"/>
    </location>
</feature>
<feature type="zinc finger region" description="CR-type" evidence="1">
    <location>
        <begin position="133"/>
        <end position="211"/>
    </location>
</feature>
<feature type="binding site" evidence="1">
    <location>
        <position position="146"/>
    </location>
    <ligand>
        <name>Zn(2+)</name>
        <dbReference type="ChEBI" id="CHEBI:29105"/>
        <label>1</label>
    </ligand>
</feature>
<feature type="binding site" evidence="1">
    <location>
        <position position="149"/>
    </location>
    <ligand>
        <name>Zn(2+)</name>
        <dbReference type="ChEBI" id="CHEBI:29105"/>
        <label>1</label>
    </ligand>
</feature>
<feature type="binding site" evidence="1">
    <location>
        <position position="163"/>
    </location>
    <ligand>
        <name>Zn(2+)</name>
        <dbReference type="ChEBI" id="CHEBI:29105"/>
        <label>2</label>
    </ligand>
</feature>
<feature type="binding site" evidence="1">
    <location>
        <position position="166"/>
    </location>
    <ligand>
        <name>Zn(2+)</name>
        <dbReference type="ChEBI" id="CHEBI:29105"/>
        <label>2</label>
    </ligand>
</feature>
<feature type="binding site" evidence="1">
    <location>
        <position position="185"/>
    </location>
    <ligand>
        <name>Zn(2+)</name>
        <dbReference type="ChEBI" id="CHEBI:29105"/>
        <label>2</label>
    </ligand>
</feature>
<feature type="binding site" evidence="1">
    <location>
        <position position="188"/>
    </location>
    <ligand>
        <name>Zn(2+)</name>
        <dbReference type="ChEBI" id="CHEBI:29105"/>
        <label>2</label>
    </ligand>
</feature>
<feature type="binding site" evidence="1">
    <location>
        <position position="199"/>
    </location>
    <ligand>
        <name>Zn(2+)</name>
        <dbReference type="ChEBI" id="CHEBI:29105"/>
        <label>1</label>
    </ligand>
</feature>
<feature type="binding site" evidence="1">
    <location>
        <position position="202"/>
    </location>
    <ligand>
        <name>Zn(2+)</name>
        <dbReference type="ChEBI" id="CHEBI:29105"/>
        <label>1</label>
    </ligand>
</feature>
<organism>
    <name type="scientific">Haemophilus influenzae (strain 86-028NP)</name>
    <dbReference type="NCBI Taxonomy" id="281310"/>
    <lineage>
        <taxon>Bacteria</taxon>
        <taxon>Pseudomonadati</taxon>
        <taxon>Pseudomonadota</taxon>
        <taxon>Gammaproteobacteria</taxon>
        <taxon>Pasteurellales</taxon>
        <taxon>Pasteurellaceae</taxon>
        <taxon>Haemophilus</taxon>
    </lineage>
</organism>
<name>DNAJ_HAEI8</name>
<comment type="function">
    <text evidence="1">Participates actively in the response to hyperosmotic and heat shock by preventing the aggregation of stress-denatured proteins and by disaggregating proteins, also in an autonomous, DnaK-independent fashion. Unfolded proteins bind initially to DnaJ; upon interaction with the DnaJ-bound protein, DnaK hydrolyzes its bound ATP, resulting in the formation of a stable complex. GrpE releases ADP from DnaK; ATP binding to DnaK triggers the release of the substrate protein, thus completing the reaction cycle. Several rounds of ATP-dependent interactions between DnaJ, DnaK and GrpE are required for fully efficient folding. Also involved, together with DnaK and GrpE, in the DNA replication of plasmids through activation of initiation proteins.</text>
</comment>
<comment type="cofactor">
    <cofactor evidence="1">
        <name>Zn(2+)</name>
        <dbReference type="ChEBI" id="CHEBI:29105"/>
    </cofactor>
    <text evidence="1">Binds 2 Zn(2+) ions per monomer.</text>
</comment>
<comment type="subunit">
    <text evidence="1">Homodimer.</text>
</comment>
<comment type="subcellular location">
    <subcellularLocation>
        <location evidence="1">Cytoplasm</location>
    </subcellularLocation>
</comment>
<comment type="domain">
    <text evidence="1">The J domain is necessary and sufficient to stimulate DnaK ATPase activity. Zinc center 1 plays an important role in the autonomous, DnaK-independent chaperone activity of DnaJ. Zinc center 2 is essential for interaction with DnaK and for DnaJ activity.</text>
</comment>
<comment type="similarity">
    <text evidence="1">Belongs to the DnaJ family.</text>
</comment>
<proteinExistence type="inferred from homology"/>